<keyword id="KW-0067">ATP-binding</keyword>
<keyword id="KW-0143">Chaperone</keyword>
<keyword id="KW-0963">Cytoplasm</keyword>
<keyword id="KW-0547">Nucleotide-binding</keyword>
<keyword id="KW-1185">Reference proteome</keyword>
<keyword id="KW-0346">Stress response</keyword>
<organism>
    <name type="scientific">Methylibium petroleiphilum (strain ATCC BAA-1232 / LMG 22953 / PM1)</name>
    <dbReference type="NCBI Taxonomy" id="420662"/>
    <lineage>
        <taxon>Bacteria</taxon>
        <taxon>Pseudomonadati</taxon>
        <taxon>Pseudomonadota</taxon>
        <taxon>Betaproteobacteria</taxon>
        <taxon>Burkholderiales</taxon>
        <taxon>Sphaerotilaceae</taxon>
        <taxon>Methylibium</taxon>
    </lineage>
</organism>
<reference key="1">
    <citation type="journal article" date="2007" name="J. Bacteriol.">
        <title>Whole-genome analysis of the methyl tert-butyl ether-degrading beta-proteobacterium Methylibium petroleiphilum PM1.</title>
        <authorList>
            <person name="Kane S.R."/>
            <person name="Chakicherla A.Y."/>
            <person name="Chain P.S.G."/>
            <person name="Schmidt R."/>
            <person name="Shin M.W."/>
            <person name="Legler T.C."/>
            <person name="Scow K.M."/>
            <person name="Larimer F.W."/>
            <person name="Lucas S.M."/>
            <person name="Richardson P.M."/>
            <person name="Hristova K.R."/>
        </authorList>
    </citation>
    <scope>NUCLEOTIDE SEQUENCE [LARGE SCALE GENOMIC DNA]</scope>
    <source>
        <strain>ATCC BAA-1232 / LMG 22953 / PM1</strain>
    </source>
</reference>
<gene>
    <name evidence="1" type="primary">htpG</name>
    <name type="ordered locus">Mpe_A3161</name>
</gene>
<name>HTPG_METPP</name>
<evidence type="ECO:0000255" key="1">
    <source>
        <dbReference type="HAMAP-Rule" id="MF_00505"/>
    </source>
</evidence>
<proteinExistence type="inferred from homology"/>
<feature type="chain" id="PRO_1000014929" description="Chaperone protein HtpG">
    <location>
        <begin position="1"/>
        <end position="625"/>
    </location>
</feature>
<feature type="region of interest" description="A; substrate-binding" evidence="1">
    <location>
        <begin position="1"/>
        <end position="339"/>
    </location>
</feature>
<feature type="region of interest" description="B" evidence="1">
    <location>
        <begin position="340"/>
        <end position="557"/>
    </location>
</feature>
<feature type="region of interest" description="C" evidence="1">
    <location>
        <begin position="558"/>
        <end position="625"/>
    </location>
</feature>
<protein>
    <recommendedName>
        <fullName evidence="1">Chaperone protein HtpG</fullName>
    </recommendedName>
    <alternativeName>
        <fullName evidence="1">Heat shock protein HtpG</fullName>
    </alternativeName>
    <alternativeName>
        <fullName evidence="1">High temperature protein G</fullName>
    </alternativeName>
</protein>
<sequence>MNKQTLSFQAEVQQLLHLVTHSLYSNKEIFLRELISNASDACDKLRFEALNDAALYEDASTLEVRVSFDKEARTITIADNGIGMSADEVIANLGTIAKSGTREFVGKLSGEQAKDAQLIGQFGVGFYSGYIVADRITVESRRAGLKAEEGVRWSSAGTGDFEVENLVRAQRGTSVTLHLRDGEDEFLSAWKLKSVIGRYSDHISLPILMRGQVWDAEKSEYVTQDAWETVNKAAALWARPKSEITDAEYKSFYEQFSHDSTPPLAYTHNRVEGRSEYIQLLYLPAKAPHDLWNRDRQGGIKLYVKRVFIMDDAQALMPSYLRFVKGVIDSSDLPLNVSRELLQESRDVKAIREGSTKRVLGMLEEMAGSEDAARRDQYAAFWREFGAVLKEGVGEDHANRERLAKLLRFASTQADEGVSLADYLARMKDGQEAIYYITADTTAAARHSPQLEVFRKKGIEVLLLTDRVDEWMLSHLFEFEGKPLQSVAKGAVDLGKLQDEGEKQQAEAAAEAFKPVLEKLKDTLKERAKDVRVTTRLVDSPACLVVEDGDISGHLARLLKQAGQSAPTSLPILEVNTEHALVKRLDGSERFDDLAQVLFDQAVLAEGGQLDDPAAYVQRVNRLLV</sequence>
<dbReference type="EMBL" id="CP000555">
    <property type="protein sequence ID" value="ABM96114.1"/>
    <property type="molecule type" value="Genomic_DNA"/>
</dbReference>
<dbReference type="RefSeq" id="WP_011830737.1">
    <property type="nucleotide sequence ID" value="NC_008825.1"/>
</dbReference>
<dbReference type="SMR" id="A2SKM5"/>
<dbReference type="STRING" id="420662.Mpe_A3161"/>
<dbReference type="KEGG" id="mpt:Mpe_A3161"/>
<dbReference type="eggNOG" id="COG0326">
    <property type="taxonomic scope" value="Bacteria"/>
</dbReference>
<dbReference type="HOGENOM" id="CLU_006684_3_0_4"/>
<dbReference type="Proteomes" id="UP000000366">
    <property type="component" value="Chromosome"/>
</dbReference>
<dbReference type="GO" id="GO:0005737">
    <property type="term" value="C:cytoplasm"/>
    <property type="evidence" value="ECO:0007669"/>
    <property type="project" value="UniProtKB-SubCell"/>
</dbReference>
<dbReference type="GO" id="GO:0005524">
    <property type="term" value="F:ATP binding"/>
    <property type="evidence" value="ECO:0007669"/>
    <property type="project" value="UniProtKB-UniRule"/>
</dbReference>
<dbReference type="GO" id="GO:0016887">
    <property type="term" value="F:ATP hydrolysis activity"/>
    <property type="evidence" value="ECO:0007669"/>
    <property type="project" value="InterPro"/>
</dbReference>
<dbReference type="GO" id="GO:0140662">
    <property type="term" value="F:ATP-dependent protein folding chaperone"/>
    <property type="evidence" value="ECO:0007669"/>
    <property type="project" value="InterPro"/>
</dbReference>
<dbReference type="GO" id="GO:0051082">
    <property type="term" value="F:unfolded protein binding"/>
    <property type="evidence" value="ECO:0007669"/>
    <property type="project" value="UniProtKB-UniRule"/>
</dbReference>
<dbReference type="CDD" id="cd16927">
    <property type="entry name" value="HATPase_Hsp90-like"/>
    <property type="match status" value="1"/>
</dbReference>
<dbReference type="FunFam" id="3.30.230.80:FF:000002">
    <property type="entry name" value="Molecular chaperone HtpG"/>
    <property type="match status" value="1"/>
</dbReference>
<dbReference type="FunFam" id="3.30.565.10:FF:000009">
    <property type="entry name" value="Molecular chaperone HtpG"/>
    <property type="match status" value="1"/>
</dbReference>
<dbReference type="Gene3D" id="3.30.230.80">
    <property type="match status" value="1"/>
</dbReference>
<dbReference type="Gene3D" id="3.40.50.11260">
    <property type="match status" value="1"/>
</dbReference>
<dbReference type="Gene3D" id="1.20.120.790">
    <property type="entry name" value="Heat shock protein 90, C-terminal domain"/>
    <property type="match status" value="1"/>
</dbReference>
<dbReference type="Gene3D" id="3.30.565.10">
    <property type="entry name" value="Histidine kinase-like ATPase, C-terminal domain"/>
    <property type="match status" value="1"/>
</dbReference>
<dbReference type="HAMAP" id="MF_00505">
    <property type="entry name" value="HSP90"/>
    <property type="match status" value="1"/>
</dbReference>
<dbReference type="InterPro" id="IPR036890">
    <property type="entry name" value="HATPase_C_sf"/>
</dbReference>
<dbReference type="InterPro" id="IPR019805">
    <property type="entry name" value="Heat_shock_protein_90_CS"/>
</dbReference>
<dbReference type="InterPro" id="IPR037196">
    <property type="entry name" value="HSP90_C"/>
</dbReference>
<dbReference type="InterPro" id="IPR001404">
    <property type="entry name" value="Hsp90_fam"/>
</dbReference>
<dbReference type="InterPro" id="IPR020575">
    <property type="entry name" value="Hsp90_N"/>
</dbReference>
<dbReference type="InterPro" id="IPR020568">
    <property type="entry name" value="Ribosomal_Su5_D2-typ_SF"/>
</dbReference>
<dbReference type="NCBIfam" id="NF003555">
    <property type="entry name" value="PRK05218.1"/>
    <property type="match status" value="1"/>
</dbReference>
<dbReference type="PANTHER" id="PTHR11528">
    <property type="entry name" value="HEAT SHOCK PROTEIN 90 FAMILY MEMBER"/>
    <property type="match status" value="1"/>
</dbReference>
<dbReference type="Pfam" id="PF13589">
    <property type="entry name" value="HATPase_c_3"/>
    <property type="match status" value="1"/>
</dbReference>
<dbReference type="Pfam" id="PF00183">
    <property type="entry name" value="HSP90"/>
    <property type="match status" value="1"/>
</dbReference>
<dbReference type="PIRSF" id="PIRSF002583">
    <property type="entry name" value="Hsp90"/>
    <property type="match status" value="1"/>
</dbReference>
<dbReference type="PRINTS" id="PR00775">
    <property type="entry name" value="HEATSHOCK90"/>
</dbReference>
<dbReference type="SMART" id="SM00387">
    <property type="entry name" value="HATPase_c"/>
    <property type="match status" value="1"/>
</dbReference>
<dbReference type="SUPFAM" id="SSF55874">
    <property type="entry name" value="ATPase domain of HSP90 chaperone/DNA topoisomerase II/histidine kinase"/>
    <property type="match status" value="1"/>
</dbReference>
<dbReference type="SUPFAM" id="SSF110942">
    <property type="entry name" value="HSP90 C-terminal domain"/>
    <property type="match status" value="1"/>
</dbReference>
<dbReference type="SUPFAM" id="SSF54211">
    <property type="entry name" value="Ribosomal protein S5 domain 2-like"/>
    <property type="match status" value="1"/>
</dbReference>
<dbReference type="PROSITE" id="PS00298">
    <property type="entry name" value="HSP90"/>
    <property type="match status" value="1"/>
</dbReference>
<comment type="function">
    <text evidence="1">Molecular chaperone. Has ATPase activity.</text>
</comment>
<comment type="subunit">
    <text evidence="1">Homodimer.</text>
</comment>
<comment type="subcellular location">
    <subcellularLocation>
        <location evidence="1">Cytoplasm</location>
    </subcellularLocation>
</comment>
<comment type="similarity">
    <text evidence="1">Belongs to the heat shock protein 90 family.</text>
</comment>
<accession>A2SKM5</accession>